<name>RL25_STUS1</name>
<protein>
    <recommendedName>
        <fullName evidence="1">Large ribosomal subunit protein bL25</fullName>
    </recommendedName>
    <alternativeName>
        <fullName evidence="2">50S ribosomal protein L25</fullName>
    </alternativeName>
    <alternativeName>
        <fullName evidence="1">General stress protein CTC</fullName>
    </alternativeName>
</protein>
<accession>A4VPC5</accession>
<gene>
    <name evidence="1" type="primary">rplY</name>
    <name evidence="1" type="synonym">ctc</name>
    <name type="ordered locus">PST_3190</name>
</gene>
<feature type="chain" id="PRO_1000052922" description="Large ribosomal subunit protein bL25">
    <location>
        <begin position="1"/>
        <end position="205"/>
    </location>
</feature>
<comment type="function">
    <text evidence="1">This is one of the proteins that binds to the 5S RNA in the ribosome where it forms part of the central protuberance.</text>
</comment>
<comment type="subunit">
    <text evidence="1">Part of the 50S ribosomal subunit; part of the 5S rRNA/L5/L18/L25 subcomplex. Contacts the 5S rRNA. Binds to the 5S rRNA independently of L5 and L18.</text>
</comment>
<comment type="similarity">
    <text evidence="1">Belongs to the bacterial ribosomal protein bL25 family. CTC subfamily.</text>
</comment>
<proteinExistence type="inferred from homology"/>
<reference key="1">
    <citation type="journal article" date="2008" name="Proc. Natl. Acad. Sci. U.S.A.">
        <title>Nitrogen fixation island and rhizosphere competence traits in the genome of root-associated Pseudomonas stutzeri A1501.</title>
        <authorList>
            <person name="Yan Y."/>
            <person name="Yang J."/>
            <person name="Dou Y."/>
            <person name="Chen M."/>
            <person name="Ping S."/>
            <person name="Peng J."/>
            <person name="Lu W."/>
            <person name="Zhang W."/>
            <person name="Yao Z."/>
            <person name="Li H."/>
            <person name="Liu W."/>
            <person name="He S."/>
            <person name="Geng L."/>
            <person name="Zhang X."/>
            <person name="Yang F."/>
            <person name="Yu H."/>
            <person name="Zhan Y."/>
            <person name="Li D."/>
            <person name="Lin Z."/>
            <person name="Wang Y."/>
            <person name="Elmerich C."/>
            <person name="Lin M."/>
            <person name="Jin Q."/>
        </authorList>
    </citation>
    <scope>NUCLEOTIDE SEQUENCE [LARGE SCALE GENOMIC DNA]</scope>
    <source>
        <strain>A1501</strain>
    </source>
</reference>
<sequence length="205" mass="22200">MNDFTLNAQVRSDLGKGASRRLRRNAALVPAVIYGGNNAPQSISILAKDFAKLLENEASFSHVLNLNVDGQNESVLIKALQRHPAKGFVLHADFVRVVAGHKLTATVPLHFINQETSVGVKKQGGEILHNLNEVEVSCMPQDLPEFIEVDMANVEVGQVLHMTDIKLPKGVELVALAHGSDLPVANVHAPRVSKEDAPKEEDAAE</sequence>
<keyword id="KW-1185">Reference proteome</keyword>
<keyword id="KW-0687">Ribonucleoprotein</keyword>
<keyword id="KW-0689">Ribosomal protein</keyword>
<keyword id="KW-0694">RNA-binding</keyword>
<keyword id="KW-0699">rRNA-binding</keyword>
<dbReference type="EMBL" id="CP000304">
    <property type="protein sequence ID" value="ABP80826.1"/>
    <property type="molecule type" value="Genomic_DNA"/>
</dbReference>
<dbReference type="RefSeq" id="WP_011914270.1">
    <property type="nucleotide sequence ID" value="NC_009434.1"/>
</dbReference>
<dbReference type="SMR" id="A4VPC5"/>
<dbReference type="KEGG" id="psa:PST_3190"/>
<dbReference type="eggNOG" id="COG1825">
    <property type="taxonomic scope" value="Bacteria"/>
</dbReference>
<dbReference type="HOGENOM" id="CLU_075939_0_1_6"/>
<dbReference type="Proteomes" id="UP000000233">
    <property type="component" value="Chromosome"/>
</dbReference>
<dbReference type="GO" id="GO:0022625">
    <property type="term" value="C:cytosolic large ribosomal subunit"/>
    <property type="evidence" value="ECO:0007669"/>
    <property type="project" value="TreeGrafter"/>
</dbReference>
<dbReference type="GO" id="GO:0008097">
    <property type="term" value="F:5S rRNA binding"/>
    <property type="evidence" value="ECO:0007669"/>
    <property type="project" value="InterPro"/>
</dbReference>
<dbReference type="GO" id="GO:0003735">
    <property type="term" value="F:structural constituent of ribosome"/>
    <property type="evidence" value="ECO:0007669"/>
    <property type="project" value="InterPro"/>
</dbReference>
<dbReference type="GO" id="GO:0006412">
    <property type="term" value="P:translation"/>
    <property type="evidence" value="ECO:0007669"/>
    <property type="project" value="UniProtKB-UniRule"/>
</dbReference>
<dbReference type="CDD" id="cd00495">
    <property type="entry name" value="Ribosomal_L25_TL5_CTC"/>
    <property type="match status" value="1"/>
</dbReference>
<dbReference type="Gene3D" id="2.170.120.20">
    <property type="entry name" value="Ribosomal protein L25, beta domain"/>
    <property type="match status" value="1"/>
</dbReference>
<dbReference type="Gene3D" id="2.40.240.10">
    <property type="entry name" value="Ribosomal Protein L25, Chain P"/>
    <property type="match status" value="1"/>
</dbReference>
<dbReference type="HAMAP" id="MF_01334">
    <property type="entry name" value="Ribosomal_bL25_CTC"/>
    <property type="match status" value="1"/>
</dbReference>
<dbReference type="InterPro" id="IPR020056">
    <property type="entry name" value="Rbsml_bL25/Gln-tRNA_synth_N"/>
</dbReference>
<dbReference type="InterPro" id="IPR011035">
    <property type="entry name" value="Ribosomal_bL25/Gln-tRNA_synth"/>
</dbReference>
<dbReference type="InterPro" id="IPR020057">
    <property type="entry name" value="Ribosomal_bL25_b-dom"/>
</dbReference>
<dbReference type="InterPro" id="IPR037121">
    <property type="entry name" value="Ribosomal_bL25_C"/>
</dbReference>
<dbReference type="InterPro" id="IPR001021">
    <property type="entry name" value="Ribosomal_bL25_long"/>
</dbReference>
<dbReference type="InterPro" id="IPR029751">
    <property type="entry name" value="Ribosomal_L25_dom"/>
</dbReference>
<dbReference type="InterPro" id="IPR020930">
    <property type="entry name" value="Ribosomal_uL5_bac-type"/>
</dbReference>
<dbReference type="NCBIfam" id="TIGR00731">
    <property type="entry name" value="bL25_bact_ctc"/>
    <property type="match status" value="1"/>
</dbReference>
<dbReference type="NCBIfam" id="NF004128">
    <property type="entry name" value="PRK05618.1-2"/>
    <property type="match status" value="1"/>
</dbReference>
<dbReference type="NCBIfam" id="NF004130">
    <property type="entry name" value="PRK05618.1-5"/>
    <property type="match status" value="1"/>
</dbReference>
<dbReference type="NCBIfam" id="NF004612">
    <property type="entry name" value="PRK05943.1"/>
    <property type="match status" value="1"/>
</dbReference>
<dbReference type="PANTHER" id="PTHR33284">
    <property type="entry name" value="RIBOSOMAL PROTEIN L25/GLN-TRNA SYNTHETASE, ANTI-CODON-BINDING DOMAIN-CONTAINING PROTEIN"/>
    <property type="match status" value="1"/>
</dbReference>
<dbReference type="PANTHER" id="PTHR33284:SF1">
    <property type="entry name" value="RIBOSOMAL PROTEIN L25_GLN-TRNA SYNTHETASE, ANTI-CODON-BINDING DOMAIN-CONTAINING PROTEIN"/>
    <property type="match status" value="1"/>
</dbReference>
<dbReference type="Pfam" id="PF01386">
    <property type="entry name" value="Ribosomal_L25p"/>
    <property type="match status" value="1"/>
</dbReference>
<dbReference type="Pfam" id="PF14693">
    <property type="entry name" value="Ribosomal_TL5_C"/>
    <property type="match status" value="1"/>
</dbReference>
<dbReference type="SUPFAM" id="SSF50715">
    <property type="entry name" value="Ribosomal protein L25-like"/>
    <property type="match status" value="1"/>
</dbReference>
<evidence type="ECO:0000255" key="1">
    <source>
        <dbReference type="HAMAP-Rule" id="MF_01334"/>
    </source>
</evidence>
<evidence type="ECO:0000305" key="2"/>
<organism>
    <name type="scientific">Stutzerimonas stutzeri (strain A1501)</name>
    <name type="common">Pseudomonas stutzeri</name>
    <dbReference type="NCBI Taxonomy" id="379731"/>
    <lineage>
        <taxon>Bacteria</taxon>
        <taxon>Pseudomonadati</taxon>
        <taxon>Pseudomonadota</taxon>
        <taxon>Gammaproteobacteria</taxon>
        <taxon>Pseudomonadales</taxon>
        <taxon>Pseudomonadaceae</taxon>
        <taxon>Stutzerimonas</taxon>
    </lineage>
</organism>